<dbReference type="EMBL" id="AY518288">
    <property type="protein sequence ID" value="AAR99871.1"/>
    <property type="molecule type" value="mRNA"/>
</dbReference>
<dbReference type="EMBL" id="AC005275">
    <property type="protein sequence ID" value="AAD14467.1"/>
    <property type="status" value="ALT_SEQ"/>
    <property type="molecule type" value="Genomic_DNA"/>
</dbReference>
<dbReference type="EMBL" id="AL161496">
    <property type="protein sequence ID" value="CAB77824.1"/>
    <property type="status" value="ALT_SEQ"/>
    <property type="molecule type" value="Genomic_DNA"/>
</dbReference>
<dbReference type="EMBL" id="CP002687">
    <property type="protein sequence ID" value="AEE82313.1"/>
    <property type="molecule type" value="Genomic_DNA"/>
</dbReference>
<dbReference type="EMBL" id="CP002687">
    <property type="protein sequence ID" value="ANM67568.1"/>
    <property type="molecule type" value="Genomic_DNA"/>
</dbReference>
<dbReference type="EMBL" id="AK228109">
    <property type="protein sequence ID" value="BAF00067.1"/>
    <property type="status" value="ALT_SEQ"/>
    <property type="molecule type" value="mRNA"/>
</dbReference>
<dbReference type="PIR" id="A85043">
    <property type="entry name" value="A85043"/>
</dbReference>
<dbReference type="RefSeq" id="NP_001329389.1">
    <molecule id="Q6R2K3-1"/>
    <property type="nucleotide sequence ID" value="NM_001340445.1"/>
</dbReference>
<dbReference type="RefSeq" id="NP_192248.2">
    <molecule id="Q6R2K3-1"/>
    <property type="nucleotide sequence ID" value="NM_116577.5"/>
</dbReference>
<dbReference type="SMR" id="Q6R2K3"/>
<dbReference type="BioGRID" id="13232">
    <property type="interactions" value="37"/>
</dbReference>
<dbReference type="FunCoup" id="Q6R2K3">
    <property type="interactions" value="1336"/>
</dbReference>
<dbReference type="IntAct" id="Q6R2K3">
    <property type="interactions" value="45"/>
</dbReference>
<dbReference type="STRING" id="3702.Q6R2K3"/>
<dbReference type="GlyCosmos" id="Q6R2K3">
    <property type="glycosylation" value="5 sites, No reported glycans"/>
</dbReference>
<dbReference type="GlyGen" id="Q6R2K3">
    <property type="glycosylation" value="5 sites"/>
</dbReference>
<dbReference type="iPTMnet" id="Q6R2K3"/>
<dbReference type="SwissPalm" id="Q6R2K3"/>
<dbReference type="PaxDb" id="3702-AT4G03390.1"/>
<dbReference type="ProteomicsDB" id="226725">
    <molecule id="Q6R2K3-1"/>
</dbReference>
<dbReference type="EnsemblPlants" id="AT4G03390.1">
    <molecule id="Q6R2K3-1"/>
    <property type="protein sequence ID" value="AT4G03390.1"/>
    <property type="gene ID" value="AT4G03390"/>
</dbReference>
<dbReference type="EnsemblPlants" id="AT4G03390.2">
    <molecule id="Q6R2K3-1"/>
    <property type="protein sequence ID" value="AT4G03390.2"/>
    <property type="gene ID" value="AT4G03390"/>
</dbReference>
<dbReference type="GeneID" id="827941"/>
<dbReference type="Gramene" id="AT4G03390.1">
    <molecule id="Q6R2K3-1"/>
    <property type="protein sequence ID" value="AT4G03390.1"/>
    <property type="gene ID" value="AT4G03390"/>
</dbReference>
<dbReference type="Gramene" id="AT4G03390.2">
    <molecule id="Q6R2K3-1"/>
    <property type="protein sequence ID" value="AT4G03390.2"/>
    <property type="gene ID" value="AT4G03390"/>
</dbReference>
<dbReference type="KEGG" id="ath:AT4G03390"/>
<dbReference type="Araport" id="AT4G03390"/>
<dbReference type="TAIR" id="AT4G03390">
    <property type="gene designation" value="SRF3"/>
</dbReference>
<dbReference type="eggNOG" id="ENOG502QR8F">
    <property type="taxonomic scope" value="Eukaryota"/>
</dbReference>
<dbReference type="HOGENOM" id="CLU_000288_92_2_1"/>
<dbReference type="InParanoid" id="Q6R2K3"/>
<dbReference type="OMA" id="AGGRCCF"/>
<dbReference type="PhylomeDB" id="Q6R2K3"/>
<dbReference type="PRO" id="PR:Q6R2K3"/>
<dbReference type="Proteomes" id="UP000006548">
    <property type="component" value="Chromosome 4"/>
</dbReference>
<dbReference type="ExpressionAtlas" id="Q6R2K3">
    <property type="expression patterns" value="baseline and differential"/>
</dbReference>
<dbReference type="GO" id="GO:0005886">
    <property type="term" value="C:plasma membrane"/>
    <property type="evidence" value="ECO:0007005"/>
    <property type="project" value="TAIR"/>
</dbReference>
<dbReference type="GO" id="GO:0005524">
    <property type="term" value="F:ATP binding"/>
    <property type="evidence" value="ECO:0007669"/>
    <property type="project" value="UniProtKB-KW"/>
</dbReference>
<dbReference type="GO" id="GO:0004672">
    <property type="term" value="F:protein kinase activity"/>
    <property type="evidence" value="ECO:0007669"/>
    <property type="project" value="InterPro"/>
</dbReference>
<dbReference type="GO" id="GO:0007623">
    <property type="term" value="P:circadian rhythm"/>
    <property type="evidence" value="ECO:0000270"/>
    <property type="project" value="TAIR"/>
</dbReference>
<dbReference type="FunFam" id="3.80.10.10:FF:000062">
    <property type="entry name" value="protein STRUBBELIG-RECEPTOR FAMILY 3"/>
    <property type="match status" value="1"/>
</dbReference>
<dbReference type="FunFam" id="3.30.200.20:FF:000125">
    <property type="entry name" value="Protein STRUBBELIG-RECEPTOR FAMILY 8"/>
    <property type="match status" value="1"/>
</dbReference>
<dbReference type="FunFam" id="1.10.510.10:FF:000095">
    <property type="entry name" value="protein STRUBBELIG-RECEPTOR FAMILY 8"/>
    <property type="match status" value="1"/>
</dbReference>
<dbReference type="Gene3D" id="3.30.200.20">
    <property type="entry name" value="Phosphorylase Kinase, domain 1"/>
    <property type="match status" value="1"/>
</dbReference>
<dbReference type="Gene3D" id="3.80.10.10">
    <property type="entry name" value="Ribonuclease Inhibitor"/>
    <property type="match status" value="1"/>
</dbReference>
<dbReference type="Gene3D" id="1.10.510.10">
    <property type="entry name" value="Transferase(Phosphotransferase) domain 1"/>
    <property type="match status" value="1"/>
</dbReference>
<dbReference type="InterPro" id="IPR011009">
    <property type="entry name" value="Kinase-like_dom_sf"/>
</dbReference>
<dbReference type="InterPro" id="IPR001611">
    <property type="entry name" value="Leu-rich_rpt"/>
</dbReference>
<dbReference type="InterPro" id="IPR032675">
    <property type="entry name" value="LRR_dom_sf"/>
</dbReference>
<dbReference type="InterPro" id="IPR013210">
    <property type="entry name" value="LRR_N_plant-typ"/>
</dbReference>
<dbReference type="InterPro" id="IPR046959">
    <property type="entry name" value="PRK1-6/SRF4-like"/>
</dbReference>
<dbReference type="InterPro" id="IPR000719">
    <property type="entry name" value="Prot_kinase_dom"/>
</dbReference>
<dbReference type="InterPro" id="IPR001245">
    <property type="entry name" value="Ser-Thr/Tyr_kinase_cat_dom"/>
</dbReference>
<dbReference type="PANTHER" id="PTHR48007">
    <property type="entry name" value="LEUCINE-RICH REPEAT RECEPTOR-LIKE PROTEIN KINASE PXC1"/>
    <property type="match status" value="1"/>
</dbReference>
<dbReference type="PANTHER" id="PTHR48007:SF68">
    <property type="entry name" value="PROTEIN KINASE DOMAIN-CONTAINING PROTEIN"/>
    <property type="match status" value="1"/>
</dbReference>
<dbReference type="Pfam" id="PF00560">
    <property type="entry name" value="LRR_1"/>
    <property type="match status" value="2"/>
</dbReference>
<dbReference type="Pfam" id="PF08263">
    <property type="entry name" value="LRRNT_2"/>
    <property type="match status" value="1"/>
</dbReference>
<dbReference type="Pfam" id="PF07714">
    <property type="entry name" value="PK_Tyr_Ser-Thr"/>
    <property type="match status" value="1"/>
</dbReference>
<dbReference type="SUPFAM" id="SSF101447">
    <property type="entry name" value="Formin homology 2 domain (FH2 domain)"/>
    <property type="match status" value="1"/>
</dbReference>
<dbReference type="SUPFAM" id="SSF52058">
    <property type="entry name" value="L domain-like"/>
    <property type="match status" value="1"/>
</dbReference>
<dbReference type="SUPFAM" id="SSF56112">
    <property type="entry name" value="Protein kinase-like (PK-like)"/>
    <property type="match status" value="1"/>
</dbReference>
<dbReference type="PROSITE" id="PS50011">
    <property type="entry name" value="PROTEIN_KINASE_DOM"/>
    <property type="match status" value="1"/>
</dbReference>
<evidence type="ECO:0000255" key="1"/>
<evidence type="ECO:0000255" key="2">
    <source>
        <dbReference type="PROSITE-ProRule" id="PRU00159"/>
    </source>
</evidence>
<evidence type="ECO:0000256" key="3">
    <source>
        <dbReference type="SAM" id="MobiDB-lite"/>
    </source>
</evidence>
<evidence type="ECO:0000269" key="4">
    <source>
    </source>
</evidence>
<evidence type="ECO:0000269" key="5">
    <source>
    </source>
</evidence>
<evidence type="ECO:0000303" key="6">
    <source ref="4"/>
</evidence>
<evidence type="ECO:0000305" key="7"/>
<organism>
    <name type="scientific">Arabidopsis thaliana</name>
    <name type="common">Mouse-ear cress</name>
    <dbReference type="NCBI Taxonomy" id="3702"/>
    <lineage>
        <taxon>Eukaryota</taxon>
        <taxon>Viridiplantae</taxon>
        <taxon>Streptophyta</taxon>
        <taxon>Embryophyta</taxon>
        <taxon>Tracheophyta</taxon>
        <taxon>Spermatophyta</taxon>
        <taxon>Magnoliopsida</taxon>
        <taxon>eudicotyledons</taxon>
        <taxon>Gunneridae</taxon>
        <taxon>Pentapetalae</taxon>
        <taxon>rosids</taxon>
        <taxon>malvids</taxon>
        <taxon>Brassicales</taxon>
        <taxon>Brassicaceae</taxon>
        <taxon>Camelineae</taxon>
        <taxon>Arabidopsis</taxon>
    </lineage>
</organism>
<proteinExistence type="evidence at protein level"/>
<accession>Q6R2K3</accession>
<accession>Q0WS32</accession>
<accession>Q9ZQZ2</accession>
<reference key="1">
    <citation type="journal article" date="2007" name="BMC Plant Biol.">
        <title>Molecular characterisation of the STRUBBELIG-RECEPTOR FAMILY of genes encoding putative leucine-rich repeat receptor-like kinases in Arabidopsis thaliana.</title>
        <authorList>
            <person name="Eyueboglu B."/>
            <person name="Pfister K."/>
            <person name="Haberer G."/>
            <person name="Chevalier D."/>
            <person name="Fuchs A."/>
            <person name="Mayer K.F.X."/>
            <person name="Schneitz K."/>
        </authorList>
    </citation>
    <scope>NUCLEOTIDE SEQUENCE [MRNA] (ISOFORM 1)</scope>
    <scope>FUNCTION</scope>
    <scope>TISSUE SPECIFICITY</scope>
    <source>
        <strain>cv. Columbia</strain>
    </source>
</reference>
<reference key="2">
    <citation type="journal article" date="1999" name="Nature">
        <title>Sequence and analysis of chromosome 4 of the plant Arabidopsis thaliana.</title>
        <authorList>
            <person name="Mayer K.F.X."/>
            <person name="Schueller C."/>
            <person name="Wambutt R."/>
            <person name="Murphy G."/>
            <person name="Volckaert G."/>
            <person name="Pohl T."/>
            <person name="Duesterhoeft A."/>
            <person name="Stiekema W."/>
            <person name="Entian K.-D."/>
            <person name="Terryn N."/>
            <person name="Harris B."/>
            <person name="Ansorge W."/>
            <person name="Brandt P."/>
            <person name="Grivell L.A."/>
            <person name="Rieger M."/>
            <person name="Weichselgartner M."/>
            <person name="de Simone V."/>
            <person name="Obermaier B."/>
            <person name="Mache R."/>
            <person name="Mueller M."/>
            <person name="Kreis M."/>
            <person name="Delseny M."/>
            <person name="Puigdomenech P."/>
            <person name="Watson M."/>
            <person name="Schmidtheini T."/>
            <person name="Reichert B."/>
            <person name="Portetelle D."/>
            <person name="Perez-Alonso M."/>
            <person name="Boutry M."/>
            <person name="Bancroft I."/>
            <person name="Vos P."/>
            <person name="Hoheisel J."/>
            <person name="Zimmermann W."/>
            <person name="Wedler H."/>
            <person name="Ridley P."/>
            <person name="Langham S.-A."/>
            <person name="McCullagh B."/>
            <person name="Bilham L."/>
            <person name="Robben J."/>
            <person name="van der Schueren J."/>
            <person name="Grymonprez B."/>
            <person name="Chuang Y.-J."/>
            <person name="Vandenbussche F."/>
            <person name="Braeken M."/>
            <person name="Weltjens I."/>
            <person name="Voet M."/>
            <person name="Bastiaens I."/>
            <person name="Aert R."/>
            <person name="Defoor E."/>
            <person name="Weitzenegger T."/>
            <person name="Bothe G."/>
            <person name="Ramsperger U."/>
            <person name="Hilbert H."/>
            <person name="Braun M."/>
            <person name="Holzer E."/>
            <person name="Brandt A."/>
            <person name="Peters S."/>
            <person name="van Staveren M."/>
            <person name="Dirkse W."/>
            <person name="Mooijman P."/>
            <person name="Klein Lankhorst R."/>
            <person name="Rose M."/>
            <person name="Hauf J."/>
            <person name="Koetter P."/>
            <person name="Berneiser S."/>
            <person name="Hempel S."/>
            <person name="Feldpausch M."/>
            <person name="Lamberth S."/>
            <person name="Van den Daele H."/>
            <person name="De Keyser A."/>
            <person name="Buysshaert C."/>
            <person name="Gielen J."/>
            <person name="Villarroel R."/>
            <person name="De Clercq R."/>
            <person name="van Montagu M."/>
            <person name="Rogers J."/>
            <person name="Cronin A."/>
            <person name="Quail M.A."/>
            <person name="Bray-Allen S."/>
            <person name="Clark L."/>
            <person name="Doggett J."/>
            <person name="Hall S."/>
            <person name="Kay M."/>
            <person name="Lennard N."/>
            <person name="McLay K."/>
            <person name="Mayes R."/>
            <person name="Pettett A."/>
            <person name="Rajandream M.A."/>
            <person name="Lyne M."/>
            <person name="Benes V."/>
            <person name="Rechmann S."/>
            <person name="Borkova D."/>
            <person name="Bloecker H."/>
            <person name="Scharfe M."/>
            <person name="Grimm M."/>
            <person name="Loehnert T.-H."/>
            <person name="Dose S."/>
            <person name="de Haan M."/>
            <person name="Maarse A.C."/>
            <person name="Schaefer M."/>
            <person name="Mueller-Auer S."/>
            <person name="Gabel C."/>
            <person name="Fuchs M."/>
            <person name="Fartmann B."/>
            <person name="Granderath K."/>
            <person name="Dauner D."/>
            <person name="Herzl A."/>
            <person name="Neumann S."/>
            <person name="Argiriou A."/>
            <person name="Vitale D."/>
            <person name="Liguori R."/>
            <person name="Piravandi E."/>
            <person name="Massenet O."/>
            <person name="Quigley F."/>
            <person name="Clabauld G."/>
            <person name="Muendlein A."/>
            <person name="Felber R."/>
            <person name="Schnabl S."/>
            <person name="Hiller R."/>
            <person name="Schmidt W."/>
            <person name="Lecharny A."/>
            <person name="Aubourg S."/>
            <person name="Chefdor F."/>
            <person name="Cooke R."/>
            <person name="Berger C."/>
            <person name="Monfort A."/>
            <person name="Casacuberta E."/>
            <person name="Gibbons T."/>
            <person name="Weber N."/>
            <person name="Vandenbol M."/>
            <person name="Bargues M."/>
            <person name="Terol J."/>
            <person name="Torres A."/>
            <person name="Perez-Perez A."/>
            <person name="Purnelle B."/>
            <person name="Bent E."/>
            <person name="Johnson S."/>
            <person name="Tacon D."/>
            <person name="Jesse T."/>
            <person name="Heijnen L."/>
            <person name="Schwarz S."/>
            <person name="Scholler P."/>
            <person name="Heber S."/>
            <person name="Francs P."/>
            <person name="Bielke C."/>
            <person name="Frishman D."/>
            <person name="Haase D."/>
            <person name="Lemcke K."/>
            <person name="Mewes H.-W."/>
            <person name="Stocker S."/>
            <person name="Zaccaria P."/>
            <person name="Bevan M."/>
            <person name="Wilson R.K."/>
            <person name="de la Bastide M."/>
            <person name="Habermann K."/>
            <person name="Parnell L."/>
            <person name="Dedhia N."/>
            <person name="Gnoj L."/>
            <person name="Schutz K."/>
            <person name="Huang E."/>
            <person name="Spiegel L."/>
            <person name="Sekhon M."/>
            <person name="Murray J."/>
            <person name="Sheet P."/>
            <person name="Cordes M."/>
            <person name="Abu-Threideh J."/>
            <person name="Stoneking T."/>
            <person name="Kalicki J."/>
            <person name="Graves T."/>
            <person name="Harmon G."/>
            <person name="Edwards J."/>
            <person name="Latreille P."/>
            <person name="Courtney L."/>
            <person name="Cloud J."/>
            <person name="Abbott A."/>
            <person name="Scott K."/>
            <person name="Johnson D."/>
            <person name="Minx P."/>
            <person name="Bentley D."/>
            <person name="Fulton B."/>
            <person name="Miller N."/>
            <person name="Greco T."/>
            <person name="Kemp K."/>
            <person name="Kramer J."/>
            <person name="Fulton L."/>
            <person name="Mardis E."/>
            <person name="Dante M."/>
            <person name="Pepin K."/>
            <person name="Hillier L.W."/>
            <person name="Nelson J."/>
            <person name="Spieth J."/>
            <person name="Ryan E."/>
            <person name="Andrews S."/>
            <person name="Geisel C."/>
            <person name="Layman D."/>
            <person name="Du H."/>
            <person name="Ali J."/>
            <person name="Berghoff A."/>
            <person name="Jones K."/>
            <person name="Drone K."/>
            <person name="Cotton M."/>
            <person name="Joshu C."/>
            <person name="Antonoiu B."/>
            <person name="Zidanic M."/>
            <person name="Strong C."/>
            <person name="Sun H."/>
            <person name="Lamar B."/>
            <person name="Yordan C."/>
            <person name="Ma P."/>
            <person name="Zhong J."/>
            <person name="Preston R."/>
            <person name="Vil D."/>
            <person name="Shekher M."/>
            <person name="Matero A."/>
            <person name="Shah R."/>
            <person name="Swaby I.K."/>
            <person name="O'Shaughnessy A."/>
            <person name="Rodriguez M."/>
            <person name="Hoffman J."/>
            <person name="Till S."/>
            <person name="Granat S."/>
            <person name="Shohdy N."/>
            <person name="Hasegawa A."/>
            <person name="Hameed A."/>
            <person name="Lodhi M."/>
            <person name="Johnson A."/>
            <person name="Chen E."/>
            <person name="Marra M.A."/>
            <person name="Martienssen R."/>
            <person name="McCombie W.R."/>
        </authorList>
    </citation>
    <scope>NUCLEOTIDE SEQUENCE [LARGE SCALE GENOMIC DNA]</scope>
    <source>
        <strain>cv. Columbia</strain>
    </source>
</reference>
<reference key="3">
    <citation type="journal article" date="2017" name="Plant J.">
        <title>Araport11: a complete reannotation of the Arabidopsis thaliana reference genome.</title>
        <authorList>
            <person name="Cheng C.Y."/>
            <person name="Krishnakumar V."/>
            <person name="Chan A.P."/>
            <person name="Thibaud-Nissen F."/>
            <person name="Schobel S."/>
            <person name="Town C.D."/>
        </authorList>
    </citation>
    <scope>GENOME REANNOTATION</scope>
    <source>
        <strain>cv. Columbia</strain>
    </source>
</reference>
<reference key="4">
    <citation type="submission" date="2006-07" db="EMBL/GenBank/DDBJ databases">
        <title>Large-scale analysis of RIKEN Arabidopsis full-length (RAFL) cDNAs.</title>
        <authorList>
            <person name="Totoki Y."/>
            <person name="Seki M."/>
            <person name="Ishida J."/>
            <person name="Nakajima M."/>
            <person name="Enju A."/>
            <person name="Kamiya A."/>
            <person name="Narusaka M."/>
            <person name="Shin-i T."/>
            <person name="Nakagawa M."/>
            <person name="Sakamoto N."/>
            <person name="Oishi K."/>
            <person name="Kohara Y."/>
            <person name="Kobayashi M."/>
            <person name="Toyoda A."/>
            <person name="Sakaki Y."/>
            <person name="Sakurai T."/>
            <person name="Iida K."/>
            <person name="Akiyama K."/>
            <person name="Satou M."/>
            <person name="Toyoda T."/>
            <person name="Konagaya A."/>
            <person name="Carninci P."/>
            <person name="Kawai J."/>
            <person name="Hayashizaki Y."/>
            <person name="Shinozaki K."/>
        </authorList>
    </citation>
    <scope>NUCLEOTIDE SEQUENCE [LARGE SCALE MRNA] (ISOFORM 2)</scope>
    <source>
        <strain>cv. Columbia</strain>
    </source>
</reference>
<reference key="5">
    <citation type="journal article" date="2007" name="Dev. Biol.">
        <title>The role of the SCRAMBLED receptor-like kinase in patterning the Arabidopsis root epidermis.</title>
        <authorList>
            <person name="Kwak S.-H."/>
            <person name="Schiefelbein J."/>
        </authorList>
    </citation>
    <scope>FUNCTION</scope>
    <scope>DISRUPTION PHENOTYPE</scope>
</reference>
<comment type="function">
    <text evidence="4 5">Not essential for epidermal patterning and not redundant with STRUBBELIG.</text>
</comment>
<comment type="interaction">
    <interactant intactId="EBI-20651925">
        <id>Q6R2K3</id>
    </interactant>
    <interactant intactId="EBI-1238687">
        <id>O04567</id>
        <label>At1g27190</label>
    </interactant>
    <organismsDiffer>false</organismsDiffer>
    <experiments>2</experiments>
</comment>
<comment type="interaction">
    <interactant intactId="EBI-20651925">
        <id>Q6R2K3</id>
    </interactant>
    <interactant intactId="EBI-617138">
        <id>Q94F62</id>
        <label>BAK1</label>
    </interactant>
    <organismsDiffer>false</organismsDiffer>
    <experiments>2</experiments>
</comment>
<comment type="interaction">
    <interactant intactId="EBI-20651925">
        <id>Q6R2K3</id>
    </interactant>
    <interactant intactId="EBI-16940407">
        <id>Q42371</id>
        <label>ERECTA</label>
    </interactant>
    <organismsDiffer>false</organismsDiffer>
    <experiments>2</experiments>
</comment>
<comment type="interaction">
    <interactant intactId="EBI-20651925">
        <id>Q6R2K3</id>
    </interactant>
    <interactant intactId="EBI-16895926">
        <id>Q6XAT2</id>
        <label>ERL2</label>
    </interactant>
    <organismsDiffer>false</organismsDiffer>
    <experiments>2</experiments>
</comment>
<comment type="interaction">
    <interactant intactId="EBI-20651925">
        <id>Q6R2K3</id>
    </interactant>
    <interactant intactId="EBI-16905069">
        <id>C0LGQ5</id>
        <label>GSO1</label>
    </interactant>
    <organismsDiffer>false</organismsDiffer>
    <experiments>2</experiments>
</comment>
<comment type="interaction">
    <interactant intactId="EBI-20651925">
        <id>Q6R2K3</id>
    </interactant>
    <interactant intactId="EBI-20651739">
        <id>Q9ZVD4</id>
        <label>LRR-RLK</label>
    </interactant>
    <organismsDiffer>false</organismsDiffer>
    <experiments>2</experiments>
</comment>
<comment type="interaction">
    <interactant intactId="EBI-20651925">
        <id>Q6R2K3</id>
    </interactant>
    <interactant intactId="EBI-20665360">
        <id>C0LGU0</id>
        <label>PRK1</label>
    </interactant>
    <organismsDiffer>false</organismsDiffer>
    <experiments>2</experiments>
</comment>
<comment type="interaction">
    <interactant intactId="EBI-20651925">
        <id>Q6R2K3</id>
    </interactant>
    <interactant intactId="EBI-17072125">
        <id>Q8RWZ1</id>
        <label>SUB</label>
    </interactant>
    <organismsDiffer>false</organismsDiffer>
    <experiments>2</experiments>
</comment>
<comment type="subcellular location">
    <subcellularLocation>
        <location evidence="7">Membrane</location>
        <topology evidence="7">Multi-pass membrane protein</topology>
    </subcellularLocation>
</comment>
<comment type="alternative products">
    <event type="alternative splicing"/>
    <isoform>
        <id>Q6R2K3-1</id>
        <name>1</name>
        <sequence type="displayed"/>
    </isoform>
    <isoform>
        <id>Q6R2K3-2</id>
        <name>2</name>
        <sequence type="described" ref="VSP_029610 VSP_029611"/>
    </isoform>
</comment>
<comment type="tissue specificity">
    <text evidence="5">Expressed in seedlings, roots, stems, leaves, flowers and siliques.</text>
</comment>
<comment type="domain">
    <text>The protein kinase domain is predicted to be catalytically inactive.</text>
</comment>
<comment type="disruption phenotype">
    <text evidence="4">Plants do not show root phenotype alteration.</text>
</comment>
<comment type="miscellaneous">
    <text>Over-expression of SRF3 led to male-sterility in both cv. Landsberg and cv. Columbia.</text>
</comment>
<comment type="similarity">
    <text evidence="2">Belongs to the protein kinase superfamily. Ser/Thr protein kinase family.</text>
</comment>
<comment type="caution">
    <text evidence="7">An alternative isoform might be encoded by the 3'part of the transcript derived from AK228109.</text>
</comment>
<comment type="sequence caution" evidence="7">
    <conflict type="erroneous gene model prediction">
        <sequence resource="EMBL-CDS" id="AAD14467"/>
    </conflict>
</comment>
<comment type="sequence caution" evidence="7">
    <conflict type="erroneous translation">
        <sequence resource="EMBL-CDS" id="BAF00067"/>
    </conflict>
    <text>Wrong choice of CDS.</text>
</comment>
<comment type="sequence caution" evidence="7">
    <conflict type="erroneous gene model prediction">
        <sequence resource="EMBL-CDS" id="CAB77824"/>
    </conflict>
</comment>
<name>SRF3_ARATH</name>
<gene>
    <name type="primary">SRF3</name>
    <name type="ordered locus">At4g03390</name>
    <name type="ORF">F4C21.35</name>
</gene>
<keyword id="KW-0025">Alternative splicing</keyword>
<keyword id="KW-0067">ATP-binding</keyword>
<keyword id="KW-0325">Glycoprotein</keyword>
<keyword id="KW-0433">Leucine-rich repeat</keyword>
<keyword id="KW-0472">Membrane</keyword>
<keyword id="KW-0547">Nucleotide-binding</keyword>
<keyword id="KW-0675">Receptor</keyword>
<keyword id="KW-1185">Reference proteome</keyword>
<keyword id="KW-0677">Repeat</keyword>
<keyword id="KW-0732">Signal</keyword>
<keyword id="KW-0812">Transmembrane</keyword>
<keyword id="KW-1133">Transmembrane helix</keyword>
<feature type="signal peptide" evidence="1">
    <location>
        <begin position="1"/>
        <end position="29"/>
    </location>
</feature>
<feature type="chain" id="PRO_0000311843" description="Protein STRUBBELIG-RECEPTOR FAMILY 3">
    <location>
        <begin position="30"/>
        <end position="776"/>
    </location>
</feature>
<feature type="topological domain" description="Cytoplasmic" evidence="1">
    <location>
        <begin position="30"/>
        <end position="35"/>
    </location>
</feature>
<feature type="transmembrane region" description="Helical" evidence="1">
    <location>
        <begin position="36"/>
        <end position="56"/>
    </location>
</feature>
<feature type="topological domain" description="Extracellular" evidence="1">
    <location>
        <begin position="57"/>
        <end position="316"/>
    </location>
</feature>
<feature type="transmembrane region" description="Helical" evidence="1">
    <location>
        <begin position="317"/>
        <end position="337"/>
    </location>
</feature>
<feature type="topological domain" description="Cytoplasmic" evidence="1">
    <location>
        <begin position="338"/>
        <end position="776"/>
    </location>
</feature>
<feature type="repeat" description="LRR 1">
    <location>
        <begin position="99"/>
        <end position="120"/>
    </location>
</feature>
<feature type="repeat" description="LRR 2">
    <location>
        <begin position="121"/>
        <end position="143"/>
    </location>
</feature>
<feature type="repeat" description="LRR 3">
    <location>
        <begin position="145"/>
        <end position="167"/>
    </location>
</feature>
<feature type="repeat" description="LRR 4">
    <location>
        <begin position="169"/>
        <end position="191"/>
    </location>
</feature>
<feature type="repeat" description="LRR 5">
    <location>
        <begin position="193"/>
        <end position="215"/>
    </location>
</feature>
<feature type="repeat" description="LRR 6">
    <location>
        <begin position="216"/>
        <end position="236"/>
    </location>
</feature>
<feature type="domain" description="Protein kinase" evidence="2">
    <location>
        <begin position="485"/>
        <end position="763"/>
    </location>
</feature>
<feature type="region of interest" description="Disordered" evidence="3">
    <location>
        <begin position="251"/>
        <end position="311"/>
    </location>
</feature>
<feature type="region of interest" description="Disordered" evidence="3">
    <location>
        <begin position="355"/>
        <end position="440"/>
    </location>
</feature>
<feature type="compositionally biased region" description="Low complexity" evidence="3">
    <location>
        <begin position="254"/>
        <end position="268"/>
    </location>
</feature>
<feature type="compositionally biased region" description="Pro residues" evidence="3">
    <location>
        <begin position="269"/>
        <end position="284"/>
    </location>
</feature>
<feature type="compositionally biased region" description="Low complexity" evidence="3">
    <location>
        <begin position="298"/>
        <end position="309"/>
    </location>
</feature>
<feature type="compositionally biased region" description="Basic and acidic residues" evidence="3">
    <location>
        <begin position="381"/>
        <end position="407"/>
    </location>
</feature>
<feature type="compositionally biased region" description="Pro residues" evidence="3">
    <location>
        <begin position="426"/>
        <end position="440"/>
    </location>
</feature>
<feature type="binding site" evidence="2">
    <location>
        <begin position="491"/>
        <end position="499"/>
    </location>
    <ligand>
        <name>ATP</name>
        <dbReference type="ChEBI" id="CHEBI:30616"/>
    </ligand>
</feature>
<feature type="binding site" evidence="2">
    <location>
        <position position="513"/>
    </location>
    <ligand>
        <name>ATP</name>
        <dbReference type="ChEBI" id="CHEBI:30616"/>
    </ligand>
</feature>
<feature type="glycosylation site" description="N-linked (GlcNAc...) asparagine" evidence="1">
    <location>
        <position position="72"/>
    </location>
</feature>
<feature type="glycosylation site" description="N-linked (GlcNAc...) asparagine" evidence="1">
    <location>
        <position position="179"/>
    </location>
</feature>
<feature type="glycosylation site" description="N-linked (GlcNAc...) asparagine" evidence="1">
    <location>
        <position position="248"/>
    </location>
</feature>
<feature type="glycosylation site" description="N-linked (GlcNAc...) asparagine" evidence="1">
    <location>
        <position position="253"/>
    </location>
</feature>
<feature type="glycosylation site" description="N-linked (GlcNAc...) asparagine" evidence="1">
    <location>
        <position position="310"/>
    </location>
</feature>
<feature type="splice variant" id="VSP_029610" description="In isoform 2." evidence="6">
    <original>APSLSPSL</original>
    <variation>TTTTSSFG</variation>
    <location>
        <begin position="258"/>
        <end position="265"/>
    </location>
</feature>
<feature type="splice variant" id="VSP_029611" description="In isoform 2." evidence="6">
    <location>
        <begin position="266"/>
        <end position="776"/>
    </location>
</feature>
<protein>
    <recommendedName>
        <fullName>Protein STRUBBELIG-RECEPTOR FAMILY 3</fullName>
    </recommendedName>
    <alternativeName>
        <fullName>Leucine-rich repeat receptor kinase-like protein SRF3</fullName>
    </alternativeName>
</protein>
<sequence>MAAKRSIYCLLLLPLLLSLLIWIPSISLAATNPDDVAAINGLFAALGAPVLPGWIASGGDPCGEAWQGIICNVSDIISITVNAANLQGELGDNLAKFTSIRGIDFSNNRIGGSIPSTLPVTLQHFFLSANQFTGSIPESLGTLSFLNDMSLNDNLLSGELPDVFQNLVGLINLDISSNNISGTLPPSMENLLTLTTLRVQNNQLSGTLDVLQGLPLQDLNIENNLFSGPIPDKLLSIPKFLHEGNPFNATMINSTSTAPSLSPSLSPTKPAPTRPFSGVPPPPNERNRGKVADGPSDSEGSSSENSKGKNSSHTKKIILIAFAGVLVFIILVLAILLLLPKCARRREHANRVFKPHQVGADRGSRENALENGTPVLPPPGRSEKVQREPFKKAGEEPKVLHDLERLRRPAPISRQESQDIDFSMLMPPPPPPPPPPPPPPLDEKVTVMPIISPERPVKKTSPKRLPLTSVKHYSIASLQQYTESFAQENLIGSGMLGSVYRARLPNGKLFAVKKLDKRASEQQQDHEFIELVNNIDMIRHSNIVELVGYCAEHDQRLLVYEYCSNGTLQDGLHSDDEFKKKLSWNTRVSMALGAARALEYLHEVCEPPIIHRNFKSANVLLDDDLSVLVSDCGLAPLISSGSVSQLSGQLLAAYGYGAPEFDSGIYTWQSDVYSFGVVMLELLTGRMSYDRDRSRGEQFLVRWAIPQLHDIDALGKMVDPSLNGQYPAKSLSHFADIISRCVQSEPEFRPLMSEVVQDLLDMIRRERHGSGDSTAD</sequence>